<sequence>MTRIVFMGTPDFSVPVLRTLIEDGYEVVGVVTQPDRPKGRKKVLTPPPVKEEALRHGIPVLQPEKVRLTEEIEKVLALKPDLIVTAAFGQILPKELLDSPKYGCINVHASLLPELRGGAPIHYSILQGKKKTGITIMYMVEKLDAGDMISKVEVDIEETDNVGTLHDKLSVAGAKLLSETVPNVIAGSISPEKQDEEKATYAPNIKREQELLDWSRTGEELYNQIRGLNPWPVAYTTLNGQNLKIWASKKIAAPTTAEPGTVVAVEKEGIIVATGNETALLLTELQPAGKKRMKGEDFVRGAHVEAGDVLGVNNEKN</sequence>
<comment type="function">
    <text evidence="1">Attaches a formyl group to the free amino group of methionyl-tRNA(fMet). The formyl group appears to play a dual role in the initiator identity of N-formylmethionyl-tRNA by promoting its recognition by IF2 and preventing the misappropriation of this tRNA by the elongation apparatus.</text>
</comment>
<comment type="catalytic activity">
    <reaction evidence="1">
        <text>L-methionyl-tRNA(fMet) + (6R)-10-formyltetrahydrofolate = N-formyl-L-methionyl-tRNA(fMet) + (6S)-5,6,7,8-tetrahydrofolate + H(+)</text>
        <dbReference type="Rhea" id="RHEA:24380"/>
        <dbReference type="Rhea" id="RHEA-COMP:9952"/>
        <dbReference type="Rhea" id="RHEA-COMP:9953"/>
        <dbReference type="ChEBI" id="CHEBI:15378"/>
        <dbReference type="ChEBI" id="CHEBI:57453"/>
        <dbReference type="ChEBI" id="CHEBI:78530"/>
        <dbReference type="ChEBI" id="CHEBI:78844"/>
        <dbReference type="ChEBI" id="CHEBI:195366"/>
        <dbReference type="EC" id="2.1.2.9"/>
    </reaction>
</comment>
<comment type="similarity">
    <text evidence="1 2">Belongs to the Fmt family.</text>
</comment>
<feature type="chain" id="PRO_0000082918" description="Methionyl-tRNA formyltransferase">
    <location>
        <begin position="1"/>
        <end position="317"/>
    </location>
</feature>
<feature type="binding site" evidence="1">
    <location>
        <begin position="110"/>
        <end position="113"/>
    </location>
    <ligand>
        <name>(6S)-5,6,7,8-tetrahydrofolate</name>
        <dbReference type="ChEBI" id="CHEBI:57453"/>
    </ligand>
</feature>
<feature type="sequence conflict" description="In Ref. 1; CAA71350." evidence="2" ref="1">
    <original>NLKIWASKKIAAPTTA</original>
    <variation>KLENMGVEKNSGTNNS</variation>
    <location>
        <begin position="242"/>
        <end position="257"/>
    </location>
</feature>
<feature type="sequence conflict" description="In Ref. 1; CAA71350." evidence="2" ref="1">
    <original>A</original>
    <variation>G</variation>
    <location>
        <position position="288"/>
    </location>
</feature>
<protein>
    <recommendedName>
        <fullName evidence="1">Methionyl-tRNA formyltransferase</fullName>
        <ecNumber evidence="1">2.1.2.9</ecNumber>
    </recommendedName>
</protein>
<name>FMT_BACSU</name>
<evidence type="ECO:0000255" key="1">
    <source>
        <dbReference type="HAMAP-Rule" id="MF_00182"/>
    </source>
</evidence>
<evidence type="ECO:0000305" key="2"/>
<reference key="1">
    <citation type="journal article" date="1997" name="J. Mol. Biol.">
        <title>A survey of polypeptide deformylase function throughout the eubacterial lineage.</title>
        <authorList>
            <person name="Mazel D."/>
            <person name="Coic E."/>
            <person name="Blanchard S."/>
            <person name="Saurin W."/>
            <person name="Marliere P."/>
        </authorList>
    </citation>
    <scope>NUCLEOTIDE SEQUENCE [GENOMIC DNA]</scope>
    <source>
        <strain>168</strain>
    </source>
</reference>
<reference key="2">
    <citation type="journal article" date="1998" name="Microbiology">
        <title>A 28 kbp segment from the spoVM region of the Bacillus subtilis 168 genome.</title>
        <authorList>
            <person name="Foulger D."/>
            <person name="Errington J."/>
        </authorList>
    </citation>
    <scope>NUCLEOTIDE SEQUENCE [GENOMIC DNA]</scope>
    <source>
        <strain>168</strain>
    </source>
</reference>
<reference key="3">
    <citation type="journal article" date="1997" name="Nature">
        <title>The complete genome sequence of the Gram-positive bacterium Bacillus subtilis.</title>
        <authorList>
            <person name="Kunst F."/>
            <person name="Ogasawara N."/>
            <person name="Moszer I."/>
            <person name="Albertini A.M."/>
            <person name="Alloni G."/>
            <person name="Azevedo V."/>
            <person name="Bertero M.G."/>
            <person name="Bessieres P."/>
            <person name="Bolotin A."/>
            <person name="Borchert S."/>
            <person name="Borriss R."/>
            <person name="Boursier L."/>
            <person name="Brans A."/>
            <person name="Braun M."/>
            <person name="Brignell S.C."/>
            <person name="Bron S."/>
            <person name="Brouillet S."/>
            <person name="Bruschi C.V."/>
            <person name="Caldwell B."/>
            <person name="Capuano V."/>
            <person name="Carter N.M."/>
            <person name="Choi S.-K."/>
            <person name="Codani J.-J."/>
            <person name="Connerton I.F."/>
            <person name="Cummings N.J."/>
            <person name="Daniel R.A."/>
            <person name="Denizot F."/>
            <person name="Devine K.M."/>
            <person name="Duesterhoeft A."/>
            <person name="Ehrlich S.D."/>
            <person name="Emmerson P.T."/>
            <person name="Entian K.-D."/>
            <person name="Errington J."/>
            <person name="Fabret C."/>
            <person name="Ferrari E."/>
            <person name="Foulger D."/>
            <person name="Fritz C."/>
            <person name="Fujita M."/>
            <person name="Fujita Y."/>
            <person name="Fuma S."/>
            <person name="Galizzi A."/>
            <person name="Galleron N."/>
            <person name="Ghim S.-Y."/>
            <person name="Glaser P."/>
            <person name="Goffeau A."/>
            <person name="Golightly E.J."/>
            <person name="Grandi G."/>
            <person name="Guiseppi G."/>
            <person name="Guy B.J."/>
            <person name="Haga K."/>
            <person name="Haiech J."/>
            <person name="Harwood C.R."/>
            <person name="Henaut A."/>
            <person name="Hilbert H."/>
            <person name="Holsappel S."/>
            <person name="Hosono S."/>
            <person name="Hullo M.-F."/>
            <person name="Itaya M."/>
            <person name="Jones L.-M."/>
            <person name="Joris B."/>
            <person name="Karamata D."/>
            <person name="Kasahara Y."/>
            <person name="Klaerr-Blanchard M."/>
            <person name="Klein C."/>
            <person name="Kobayashi Y."/>
            <person name="Koetter P."/>
            <person name="Koningstein G."/>
            <person name="Krogh S."/>
            <person name="Kumano M."/>
            <person name="Kurita K."/>
            <person name="Lapidus A."/>
            <person name="Lardinois S."/>
            <person name="Lauber J."/>
            <person name="Lazarevic V."/>
            <person name="Lee S.-M."/>
            <person name="Levine A."/>
            <person name="Liu H."/>
            <person name="Masuda S."/>
            <person name="Mauel C."/>
            <person name="Medigue C."/>
            <person name="Medina N."/>
            <person name="Mellado R.P."/>
            <person name="Mizuno M."/>
            <person name="Moestl D."/>
            <person name="Nakai S."/>
            <person name="Noback M."/>
            <person name="Noone D."/>
            <person name="O'Reilly M."/>
            <person name="Ogawa K."/>
            <person name="Ogiwara A."/>
            <person name="Oudega B."/>
            <person name="Park S.-H."/>
            <person name="Parro V."/>
            <person name="Pohl T.M."/>
            <person name="Portetelle D."/>
            <person name="Porwollik S."/>
            <person name="Prescott A.M."/>
            <person name="Presecan E."/>
            <person name="Pujic P."/>
            <person name="Purnelle B."/>
            <person name="Rapoport G."/>
            <person name="Rey M."/>
            <person name="Reynolds S."/>
            <person name="Rieger M."/>
            <person name="Rivolta C."/>
            <person name="Rocha E."/>
            <person name="Roche B."/>
            <person name="Rose M."/>
            <person name="Sadaie Y."/>
            <person name="Sato T."/>
            <person name="Scanlan E."/>
            <person name="Schleich S."/>
            <person name="Schroeter R."/>
            <person name="Scoffone F."/>
            <person name="Sekiguchi J."/>
            <person name="Sekowska A."/>
            <person name="Seror S.J."/>
            <person name="Serror P."/>
            <person name="Shin B.-S."/>
            <person name="Soldo B."/>
            <person name="Sorokin A."/>
            <person name="Tacconi E."/>
            <person name="Takagi T."/>
            <person name="Takahashi H."/>
            <person name="Takemaru K."/>
            <person name="Takeuchi M."/>
            <person name="Tamakoshi A."/>
            <person name="Tanaka T."/>
            <person name="Terpstra P."/>
            <person name="Tognoni A."/>
            <person name="Tosato V."/>
            <person name="Uchiyama S."/>
            <person name="Vandenbol M."/>
            <person name="Vannier F."/>
            <person name="Vassarotti A."/>
            <person name="Viari A."/>
            <person name="Wambutt R."/>
            <person name="Wedler E."/>
            <person name="Wedler H."/>
            <person name="Weitzenegger T."/>
            <person name="Winters P."/>
            <person name="Wipat A."/>
            <person name="Yamamoto H."/>
            <person name="Yamane K."/>
            <person name="Yasumoto K."/>
            <person name="Yata K."/>
            <person name="Yoshida K."/>
            <person name="Yoshikawa H.-F."/>
            <person name="Zumstein E."/>
            <person name="Yoshikawa H."/>
            <person name="Danchin A."/>
        </authorList>
    </citation>
    <scope>NUCLEOTIDE SEQUENCE [LARGE SCALE GENOMIC DNA]</scope>
    <source>
        <strain>168</strain>
    </source>
</reference>
<keyword id="KW-0648">Protein biosynthesis</keyword>
<keyword id="KW-1185">Reference proteome</keyword>
<keyword id="KW-0808">Transferase</keyword>
<proteinExistence type="inferred from homology"/>
<gene>
    <name evidence="1" type="primary">fmt</name>
    <name type="synonym">yloL</name>
    <name type="ordered locus">BSU15730</name>
</gene>
<accession>P94463</accession>
<accession>O34511</accession>
<organism>
    <name type="scientific">Bacillus subtilis (strain 168)</name>
    <dbReference type="NCBI Taxonomy" id="224308"/>
    <lineage>
        <taxon>Bacteria</taxon>
        <taxon>Bacillati</taxon>
        <taxon>Bacillota</taxon>
        <taxon>Bacilli</taxon>
        <taxon>Bacillales</taxon>
        <taxon>Bacillaceae</taxon>
        <taxon>Bacillus</taxon>
    </lineage>
</organism>
<dbReference type="EC" id="2.1.2.9" evidence="1"/>
<dbReference type="EMBL" id="Y10304">
    <property type="protein sequence ID" value="CAA71350.1"/>
    <property type="molecule type" value="Genomic_DNA"/>
</dbReference>
<dbReference type="EMBL" id="Y13937">
    <property type="protein sequence ID" value="CAA74263.1"/>
    <property type="molecule type" value="Genomic_DNA"/>
</dbReference>
<dbReference type="EMBL" id="AL009126">
    <property type="protein sequence ID" value="CAB13446.1"/>
    <property type="molecule type" value="Genomic_DNA"/>
</dbReference>
<dbReference type="PIR" id="A69626">
    <property type="entry name" value="A69626"/>
</dbReference>
<dbReference type="RefSeq" id="NP_389455.1">
    <property type="nucleotide sequence ID" value="NC_000964.3"/>
</dbReference>
<dbReference type="RefSeq" id="WP_003232070.1">
    <property type="nucleotide sequence ID" value="NZ_OZ025638.1"/>
</dbReference>
<dbReference type="SMR" id="P94463"/>
<dbReference type="FunCoup" id="P94463">
    <property type="interactions" value="626"/>
</dbReference>
<dbReference type="STRING" id="224308.BSU15730"/>
<dbReference type="jPOST" id="P94463"/>
<dbReference type="PaxDb" id="224308-BSU15730"/>
<dbReference type="EnsemblBacteria" id="CAB13446">
    <property type="protein sequence ID" value="CAB13446"/>
    <property type="gene ID" value="BSU_15730"/>
</dbReference>
<dbReference type="GeneID" id="936571"/>
<dbReference type="KEGG" id="bsu:BSU15730"/>
<dbReference type="PATRIC" id="fig|224308.179.peg.1713"/>
<dbReference type="eggNOG" id="COG0223">
    <property type="taxonomic scope" value="Bacteria"/>
</dbReference>
<dbReference type="InParanoid" id="P94463"/>
<dbReference type="OrthoDB" id="9802815at2"/>
<dbReference type="PhylomeDB" id="P94463"/>
<dbReference type="BioCyc" id="BSUB:BSU15730-MONOMER"/>
<dbReference type="Proteomes" id="UP000001570">
    <property type="component" value="Chromosome"/>
</dbReference>
<dbReference type="GO" id="GO:0005829">
    <property type="term" value="C:cytosol"/>
    <property type="evidence" value="ECO:0000318"/>
    <property type="project" value="GO_Central"/>
</dbReference>
<dbReference type="GO" id="GO:0004479">
    <property type="term" value="F:methionyl-tRNA formyltransferase activity"/>
    <property type="evidence" value="ECO:0000318"/>
    <property type="project" value="GO_Central"/>
</dbReference>
<dbReference type="GO" id="GO:0071951">
    <property type="term" value="P:conversion of methionyl-tRNA to N-formyl-methionyl-tRNA"/>
    <property type="evidence" value="ECO:0000318"/>
    <property type="project" value="GO_Central"/>
</dbReference>
<dbReference type="CDD" id="cd08646">
    <property type="entry name" value="FMT_core_Met-tRNA-FMT_N"/>
    <property type="match status" value="1"/>
</dbReference>
<dbReference type="CDD" id="cd08704">
    <property type="entry name" value="Met_tRNA_FMT_C"/>
    <property type="match status" value="1"/>
</dbReference>
<dbReference type="FunFam" id="3.40.50.170:FF:000004">
    <property type="entry name" value="Methionyl-tRNA formyltransferase"/>
    <property type="match status" value="1"/>
</dbReference>
<dbReference type="Gene3D" id="3.10.25.10">
    <property type="entry name" value="Formyl transferase, C-terminal domain"/>
    <property type="match status" value="1"/>
</dbReference>
<dbReference type="Gene3D" id="3.40.50.170">
    <property type="entry name" value="Formyl transferase, N-terminal domain"/>
    <property type="match status" value="1"/>
</dbReference>
<dbReference type="HAMAP" id="MF_00182">
    <property type="entry name" value="Formyl_trans"/>
    <property type="match status" value="1"/>
</dbReference>
<dbReference type="InterPro" id="IPR005794">
    <property type="entry name" value="Fmt"/>
</dbReference>
<dbReference type="InterPro" id="IPR005793">
    <property type="entry name" value="Formyl_trans_C"/>
</dbReference>
<dbReference type="InterPro" id="IPR037022">
    <property type="entry name" value="Formyl_trans_C_sf"/>
</dbReference>
<dbReference type="InterPro" id="IPR002376">
    <property type="entry name" value="Formyl_transf_N"/>
</dbReference>
<dbReference type="InterPro" id="IPR036477">
    <property type="entry name" value="Formyl_transf_N_sf"/>
</dbReference>
<dbReference type="InterPro" id="IPR011034">
    <property type="entry name" value="Formyl_transferase-like_C_sf"/>
</dbReference>
<dbReference type="InterPro" id="IPR001555">
    <property type="entry name" value="GART_AS"/>
</dbReference>
<dbReference type="InterPro" id="IPR044135">
    <property type="entry name" value="Met-tRNA-FMT_C"/>
</dbReference>
<dbReference type="InterPro" id="IPR041711">
    <property type="entry name" value="Met-tRNA-FMT_N"/>
</dbReference>
<dbReference type="NCBIfam" id="TIGR00460">
    <property type="entry name" value="fmt"/>
    <property type="match status" value="1"/>
</dbReference>
<dbReference type="PANTHER" id="PTHR11138">
    <property type="entry name" value="METHIONYL-TRNA FORMYLTRANSFERASE"/>
    <property type="match status" value="1"/>
</dbReference>
<dbReference type="PANTHER" id="PTHR11138:SF5">
    <property type="entry name" value="METHIONYL-TRNA FORMYLTRANSFERASE, MITOCHONDRIAL"/>
    <property type="match status" value="1"/>
</dbReference>
<dbReference type="Pfam" id="PF02911">
    <property type="entry name" value="Formyl_trans_C"/>
    <property type="match status" value="1"/>
</dbReference>
<dbReference type="Pfam" id="PF00551">
    <property type="entry name" value="Formyl_trans_N"/>
    <property type="match status" value="1"/>
</dbReference>
<dbReference type="SUPFAM" id="SSF50486">
    <property type="entry name" value="FMT C-terminal domain-like"/>
    <property type="match status" value="1"/>
</dbReference>
<dbReference type="SUPFAM" id="SSF53328">
    <property type="entry name" value="Formyltransferase"/>
    <property type="match status" value="1"/>
</dbReference>
<dbReference type="PROSITE" id="PS00373">
    <property type="entry name" value="GART"/>
    <property type="match status" value="1"/>
</dbReference>